<feature type="chain" id="PRO_0000362763" description="NADH-quinone oxidoreductase subunit A">
    <location>
        <begin position="1"/>
        <end position="147"/>
    </location>
</feature>
<feature type="transmembrane region" description="Helical" evidence="1">
    <location>
        <begin position="16"/>
        <end position="36"/>
    </location>
</feature>
<feature type="transmembrane region" description="Helical" evidence="1">
    <location>
        <begin position="68"/>
        <end position="88"/>
    </location>
</feature>
<feature type="transmembrane region" description="Helical" evidence="1">
    <location>
        <begin position="97"/>
        <end position="117"/>
    </location>
</feature>
<proteinExistence type="inferred from homology"/>
<keyword id="KW-0997">Cell inner membrane</keyword>
<keyword id="KW-1003">Cell membrane</keyword>
<keyword id="KW-0472">Membrane</keyword>
<keyword id="KW-0520">NAD</keyword>
<keyword id="KW-0874">Quinone</keyword>
<keyword id="KW-1278">Translocase</keyword>
<keyword id="KW-0812">Transmembrane</keyword>
<keyword id="KW-1133">Transmembrane helix</keyword>
<keyword id="KW-0813">Transport</keyword>
<keyword id="KW-0830">Ubiquinone</keyword>
<organism>
    <name type="scientific">Salmonella agona (strain SL483)</name>
    <dbReference type="NCBI Taxonomy" id="454166"/>
    <lineage>
        <taxon>Bacteria</taxon>
        <taxon>Pseudomonadati</taxon>
        <taxon>Pseudomonadota</taxon>
        <taxon>Gammaproteobacteria</taxon>
        <taxon>Enterobacterales</taxon>
        <taxon>Enterobacteriaceae</taxon>
        <taxon>Salmonella</taxon>
    </lineage>
</organism>
<reference key="1">
    <citation type="journal article" date="2011" name="J. Bacteriol.">
        <title>Comparative genomics of 28 Salmonella enterica isolates: evidence for CRISPR-mediated adaptive sublineage evolution.</title>
        <authorList>
            <person name="Fricke W.F."/>
            <person name="Mammel M.K."/>
            <person name="McDermott P.F."/>
            <person name="Tartera C."/>
            <person name="White D.G."/>
            <person name="Leclerc J.E."/>
            <person name="Ravel J."/>
            <person name="Cebula T.A."/>
        </authorList>
    </citation>
    <scope>NUCLEOTIDE SEQUENCE [LARGE SCALE GENOMIC DNA]</scope>
    <source>
        <strain>SL483</strain>
    </source>
</reference>
<name>NUOA_SALA4</name>
<dbReference type="EC" id="7.1.1.-" evidence="1"/>
<dbReference type="EMBL" id="CP001138">
    <property type="protein sequence ID" value="ACH51794.1"/>
    <property type="molecule type" value="Genomic_DNA"/>
</dbReference>
<dbReference type="RefSeq" id="WP_000062993.1">
    <property type="nucleotide sequence ID" value="NC_011149.1"/>
</dbReference>
<dbReference type="SMR" id="B5EZK9"/>
<dbReference type="GeneID" id="66756777"/>
<dbReference type="KEGG" id="sea:SeAg_B2467"/>
<dbReference type="HOGENOM" id="CLU_119549_2_0_6"/>
<dbReference type="Proteomes" id="UP000008819">
    <property type="component" value="Chromosome"/>
</dbReference>
<dbReference type="GO" id="GO:0030964">
    <property type="term" value="C:NADH dehydrogenase complex"/>
    <property type="evidence" value="ECO:0007669"/>
    <property type="project" value="TreeGrafter"/>
</dbReference>
<dbReference type="GO" id="GO:0005886">
    <property type="term" value="C:plasma membrane"/>
    <property type="evidence" value="ECO:0007669"/>
    <property type="project" value="UniProtKB-SubCell"/>
</dbReference>
<dbReference type="GO" id="GO:0008137">
    <property type="term" value="F:NADH dehydrogenase (ubiquinone) activity"/>
    <property type="evidence" value="ECO:0007669"/>
    <property type="project" value="InterPro"/>
</dbReference>
<dbReference type="GO" id="GO:0050136">
    <property type="term" value="F:NADH:ubiquinone reductase (non-electrogenic) activity"/>
    <property type="evidence" value="ECO:0007669"/>
    <property type="project" value="UniProtKB-UniRule"/>
</dbReference>
<dbReference type="GO" id="GO:0048038">
    <property type="term" value="F:quinone binding"/>
    <property type="evidence" value="ECO:0007669"/>
    <property type="project" value="UniProtKB-KW"/>
</dbReference>
<dbReference type="FunFam" id="1.20.58.1610:FF:000003">
    <property type="entry name" value="NADH-quinone oxidoreductase subunit A"/>
    <property type="match status" value="1"/>
</dbReference>
<dbReference type="Gene3D" id="1.20.58.1610">
    <property type="entry name" value="NADH:ubiquinone/plastoquinone oxidoreductase, chain 3"/>
    <property type="match status" value="1"/>
</dbReference>
<dbReference type="HAMAP" id="MF_01394">
    <property type="entry name" value="NDH1_NuoA"/>
    <property type="match status" value="1"/>
</dbReference>
<dbReference type="InterPro" id="IPR023043">
    <property type="entry name" value="NAD(P)H_OxRDtase_bac/plastid"/>
</dbReference>
<dbReference type="InterPro" id="IPR000440">
    <property type="entry name" value="NADH_UbQ/plastoQ_OxRdtase_su3"/>
</dbReference>
<dbReference type="InterPro" id="IPR038430">
    <property type="entry name" value="NDAH_ubi_oxred_su3_sf"/>
</dbReference>
<dbReference type="PANTHER" id="PTHR11058:SF21">
    <property type="entry name" value="NADH-QUINONE OXIDOREDUCTASE SUBUNIT A"/>
    <property type="match status" value="1"/>
</dbReference>
<dbReference type="PANTHER" id="PTHR11058">
    <property type="entry name" value="NADH-UBIQUINONE OXIDOREDUCTASE CHAIN 3"/>
    <property type="match status" value="1"/>
</dbReference>
<dbReference type="Pfam" id="PF00507">
    <property type="entry name" value="Oxidored_q4"/>
    <property type="match status" value="1"/>
</dbReference>
<comment type="function">
    <text evidence="1">NDH-1 shuttles electrons from NADH, via FMN and iron-sulfur (Fe-S) centers, to quinones in the respiratory chain. The immediate electron acceptor for the enzyme in this species is believed to be ubiquinone. Couples the redox reaction to proton translocation (for every two electrons transferred, four hydrogen ions are translocated across the cytoplasmic membrane), and thus conserves the redox energy in a proton gradient.</text>
</comment>
<comment type="catalytic activity">
    <reaction evidence="1">
        <text>a quinone + NADH + 5 H(+)(in) = a quinol + NAD(+) + 4 H(+)(out)</text>
        <dbReference type="Rhea" id="RHEA:57888"/>
        <dbReference type="ChEBI" id="CHEBI:15378"/>
        <dbReference type="ChEBI" id="CHEBI:24646"/>
        <dbReference type="ChEBI" id="CHEBI:57540"/>
        <dbReference type="ChEBI" id="CHEBI:57945"/>
        <dbReference type="ChEBI" id="CHEBI:132124"/>
    </reaction>
</comment>
<comment type="subunit">
    <text evidence="1">NDH-1 is composed of 13 different subunits. Subunits NuoA, H, J, K, L, M, N constitute the membrane sector of the complex.</text>
</comment>
<comment type="subcellular location">
    <subcellularLocation>
        <location evidence="1">Cell inner membrane</location>
        <topology evidence="1">Multi-pass membrane protein</topology>
    </subcellularLocation>
</comment>
<comment type="similarity">
    <text evidence="1">Belongs to the complex I subunit 3 family.</text>
</comment>
<gene>
    <name evidence="1" type="primary">nuoA</name>
    <name type="ordered locus">SeAg_B2467</name>
</gene>
<evidence type="ECO:0000255" key="1">
    <source>
        <dbReference type="HAMAP-Rule" id="MF_01394"/>
    </source>
</evidence>
<sequence length="147" mass="16493">MSMSTSTEVIAHHWAFAIFLIVAIGLCCLMLVGGWFLGGRARARHKNVPFESGIDSVGTARLRLSAKFYLVAMFFVIFDVEALYLFAWSTSIRESGWVGFVEAAIFIFVLLAGLVYLARIGALDWTPARSRRERMNPETNSIANRQR</sequence>
<accession>B5EZK9</accession>
<protein>
    <recommendedName>
        <fullName evidence="1">NADH-quinone oxidoreductase subunit A</fullName>
        <ecNumber evidence="1">7.1.1.-</ecNumber>
    </recommendedName>
    <alternativeName>
        <fullName evidence="1">NADH dehydrogenase I subunit A</fullName>
    </alternativeName>
    <alternativeName>
        <fullName evidence="1">NDH-1 subunit A</fullName>
    </alternativeName>
    <alternativeName>
        <fullName evidence="1">NUO1</fullName>
    </alternativeName>
</protein>